<organism>
    <name type="scientific">Escherichia coli (strain K12)</name>
    <dbReference type="NCBI Taxonomy" id="83333"/>
    <lineage>
        <taxon>Bacteria</taxon>
        <taxon>Pseudomonadati</taxon>
        <taxon>Pseudomonadota</taxon>
        <taxon>Gammaproteobacteria</taxon>
        <taxon>Enterobacterales</taxon>
        <taxon>Enterobacteriaceae</taxon>
        <taxon>Escherichia</taxon>
    </lineage>
</organism>
<protein>
    <recommendedName>
        <fullName>DNA repair protein RecO</fullName>
    </recommendedName>
    <alternativeName>
        <fullName>Recombination protein O</fullName>
    </alternativeName>
</protein>
<proteinExistence type="evidence at protein level"/>
<dbReference type="EMBL" id="M26416">
    <property type="protein sequence ID" value="AAA21842.1"/>
    <property type="molecule type" value="Genomic_DNA"/>
</dbReference>
<dbReference type="EMBL" id="M27251">
    <property type="protein sequence ID" value="AAA24515.1"/>
    <property type="molecule type" value="Genomic_DNA"/>
</dbReference>
<dbReference type="EMBL" id="D64044">
    <property type="protein sequence ID" value="BAA10912.1"/>
    <property type="molecule type" value="Genomic_DNA"/>
</dbReference>
<dbReference type="EMBL" id="M76470">
    <property type="protein sequence ID" value="AAA21844.1"/>
    <property type="molecule type" value="Genomic_DNA"/>
</dbReference>
<dbReference type="EMBL" id="U36841">
    <property type="protein sequence ID" value="AAA79827.1"/>
    <property type="molecule type" value="Genomic_DNA"/>
</dbReference>
<dbReference type="EMBL" id="U00096">
    <property type="protein sequence ID" value="AAC75618.1"/>
    <property type="molecule type" value="Genomic_DNA"/>
</dbReference>
<dbReference type="EMBL" id="AP009048">
    <property type="protein sequence ID" value="BAE76741.1"/>
    <property type="molecule type" value="Genomic_DNA"/>
</dbReference>
<dbReference type="EMBL" id="M74526">
    <property type="status" value="NOT_ANNOTATED_CDS"/>
    <property type="molecule type" value="Genomic_DNA"/>
</dbReference>
<dbReference type="PIR" id="JS0116">
    <property type="entry name" value="BVECRO"/>
</dbReference>
<dbReference type="RefSeq" id="NP_417060.1">
    <property type="nucleotide sequence ID" value="NC_000913.3"/>
</dbReference>
<dbReference type="RefSeq" id="WP_000399404.1">
    <property type="nucleotide sequence ID" value="NZ_STEB01000011.1"/>
</dbReference>
<dbReference type="PDB" id="3Q8D">
    <property type="method" value="X-ray"/>
    <property type="resolution" value="2.30 A"/>
    <property type="chains" value="A/B=1-242"/>
</dbReference>
<dbReference type="PDBsum" id="3Q8D"/>
<dbReference type="SMR" id="P0A7H3"/>
<dbReference type="BioGRID" id="4259430">
    <property type="interactions" value="183"/>
</dbReference>
<dbReference type="ComplexPortal" id="CPX-5126">
    <property type="entry name" value="RecOR complex"/>
</dbReference>
<dbReference type="DIP" id="DIP-48093N"/>
<dbReference type="FunCoup" id="P0A7H3">
    <property type="interactions" value="76"/>
</dbReference>
<dbReference type="IntAct" id="P0A7H3">
    <property type="interactions" value="10"/>
</dbReference>
<dbReference type="STRING" id="511145.b2565"/>
<dbReference type="PaxDb" id="511145-b2565"/>
<dbReference type="EnsemblBacteria" id="AAC75618">
    <property type="protein sequence ID" value="AAC75618"/>
    <property type="gene ID" value="b2565"/>
</dbReference>
<dbReference type="GeneID" id="947038"/>
<dbReference type="KEGG" id="ecj:JW2549"/>
<dbReference type="KEGG" id="eco:b2565"/>
<dbReference type="KEGG" id="ecoc:C3026_14210"/>
<dbReference type="PATRIC" id="fig|1411691.4.peg.4169"/>
<dbReference type="EchoBASE" id="EB0825"/>
<dbReference type="eggNOG" id="COG1381">
    <property type="taxonomic scope" value="Bacteria"/>
</dbReference>
<dbReference type="HOGENOM" id="CLU_066645_1_0_6"/>
<dbReference type="InParanoid" id="P0A7H3"/>
<dbReference type="OMA" id="YVLHSRA"/>
<dbReference type="OrthoDB" id="9804792at2"/>
<dbReference type="PhylomeDB" id="P0A7H3"/>
<dbReference type="BioCyc" id="EcoCyc:EG10832-MONOMER"/>
<dbReference type="BioCyc" id="MetaCyc:EG10832-MONOMER"/>
<dbReference type="EvolutionaryTrace" id="P0A7H3"/>
<dbReference type="PRO" id="PR:P0A7H3"/>
<dbReference type="Proteomes" id="UP000000625">
    <property type="component" value="Chromosome"/>
</dbReference>
<dbReference type="GO" id="GO:0043590">
    <property type="term" value="C:bacterial nucleoid"/>
    <property type="evidence" value="ECO:0000318"/>
    <property type="project" value="GO_Central"/>
</dbReference>
<dbReference type="GO" id="GO:0006310">
    <property type="term" value="P:DNA recombination"/>
    <property type="evidence" value="ECO:0000314"/>
    <property type="project" value="ComplexPortal"/>
</dbReference>
<dbReference type="GO" id="GO:0006302">
    <property type="term" value="P:double-strand break repair"/>
    <property type="evidence" value="ECO:0000318"/>
    <property type="project" value="GO_Central"/>
</dbReference>
<dbReference type="GO" id="GO:0000725">
    <property type="term" value="P:recombinational repair"/>
    <property type="evidence" value="ECO:0000314"/>
    <property type="project" value="EcoCyc"/>
</dbReference>
<dbReference type="GO" id="GO:0009411">
    <property type="term" value="P:response to UV"/>
    <property type="evidence" value="ECO:0000269"/>
    <property type="project" value="EcoCyc"/>
</dbReference>
<dbReference type="FunFam" id="1.20.1440.120:FF:000001">
    <property type="entry name" value="DNA repair protein RecO"/>
    <property type="match status" value="1"/>
</dbReference>
<dbReference type="FunFam" id="2.40.50.140:FF:000074">
    <property type="entry name" value="DNA repair protein RecO"/>
    <property type="match status" value="1"/>
</dbReference>
<dbReference type="Gene3D" id="2.40.50.140">
    <property type="entry name" value="Nucleic acid-binding proteins"/>
    <property type="match status" value="1"/>
</dbReference>
<dbReference type="Gene3D" id="1.20.1440.120">
    <property type="entry name" value="Recombination protein O, C-terminal domain"/>
    <property type="match status" value="1"/>
</dbReference>
<dbReference type="HAMAP" id="MF_00201">
    <property type="entry name" value="RecO"/>
    <property type="match status" value="1"/>
</dbReference>
<dbReference type="InterPro" id="IPR037278">
    <property type="entry name" value="ARFGAP/RecO"/>
</dbReference>
<dbReference type="InterPro" id="IPR022572">
    <property type="entry name" value="DNA_rep/recomb_RecO_N"/>
</dbReference>
<dbReference type="InterPro" id="IPR012340">
    <property type="entry name" value="NA-bd_OB-fold"/>
</dbReference>
<dbReference type="InterPro" id="IPR003717">
    <property type="entry name" value="RecO"/>
</dbReference>
<dbReference type="InterPro" id="IPR042242">
    <property type="entry name" value="RecO_C"/>
</dbReference>
<dbReference type="NCBIfam" id="TIGR00613">
    <property type="entry name" value="reco"/>
    <property type="match status" value="1"/>
</dbReference>
<dbReference type="PANTHER" id="PTHR33991">
    <property type="entry name" value="DNA REPAIR PROTEIN RECO"/>
    <property type="match status" value="1"/>
</dbReference>
<dbReference type="PANTHER" id="PTHR33991:SF1">
    <property type="entry name" value="DNA REPAIR PROTEIN RECO"/>
    <property type="match status" value="1"/>
</dbReference>
<dbReference type="Pfam" id="PF02565">
    <property type="entry name" value="RecO_C"/>
    <property type="match status" value="1"/>
</dbReference>
<dbReference type="Pfam" id="PF11967">
    <property type="entry name" value="RecO_N"/>
    <property type="match status" value="1"/>
</dbReference>
<dbReference type="SUPFAM" id="SSF57863">
    <property type="entry name" value="ArfGap/RecO-like zinc finger"/>
    <property type="match status" value="1"/>
</dbReference>
<dbReference type="SUPFAM" id="SSF50249">
    <property type="entry name" value="Nucleic acid-binding proteins"/>
    <property type="match status" value="1"/>
</dbReference>
<accession>P0A7H3</accession>
<accession>P15027</accession>
<accession>P76589</accession>
<accession>Q2MAG5</accession>
<name>RECO_ECOLI</name>
<reference key="1">
    <citation type="journal article" date="1989" name="J. Bacteriol.">
        <title>Genetic analysis of the rnc operon of Escherichia coli.</title>
        <authorList>
            <person name="Takiff H.E."/>
            <person name="Chen S.M."/>
            <person name="Court D.L."/>
        </authorList>
    </citation>
    <scope>NUCLEOTIDE SEQUENCE [GENOMIC DNA]</scope>
    <scope>DISRUPTION PHENOTYPE</scope>
    <scope>OPERON STRUCTURE</scope>
    <source>
        <strain>K12 / W3110</strain>
    </source>
</reference>
<reference key="2">
    <citation type="journal article" date="1989" name="J. Bacteriol.">
        <title>Molecular analysis of the Escherichia coli recO gene.</title>
        <authorList>
            <person name="Morrison P.T."/>
            <person name="Lovett S.T."/>
            <person name="Gilson L.E."/>
            <person name="Kolodner R."/>
        </authorList>
    </citation>
    <scope>NUCLEOTIDE SEQUENCE [GENOMIC DNA]</scope>
</reference>
<reference key="3">
    <citation type="submission" date="1995-09" db="EMBL/GenBank/DDBJ databases">
        <authorList>
            <person name="Nashimoto H."/>
            <person name="Saito N."/>
        </authorList>
    </citation>
    <scope>NUCLEOTIDE SEQUENCE [GENOMIC DNA]</scope>
    <source>
        <strain>K12</strain>
    </source>
</reference>
<reference key="4">
    <citation type="journal article" date="1997" name="Science">
        <title>The complete genome sequence of Escherichia coli K-12.</title>
        <authorList>
            <person name="Blattner F.R."/>
            <person name="Plunkett G. III"/>
            <person name="Bloch C.A."/>
            <person name="Perna N.T."/>
            <person name="Burland V."/>
            <person name="Riley M."/>
            <person name="Collado-Vides J."/>
            <person name="Glasner J.D."/>
            <person name="Rode C.K."/>
            <person name="Mayhew G.F."/>
            <person name="Gregor J."/>
            <person name="Davis N.W."/>
            <person name="Kirkpatrick H.A."/>
            <person name="Goeden M.A."/>
            <person name="Rose D.J."/>
            <person name="Mau B."/>
            <person name="Shao Y."/>
        </authorList>
    </citation>
    <scope>NUCLEOTIDE SEQUENCE [LARGE SCALE GENOMIC DNA]</scope>
    <source>
        <strain>K12 / MG1655 / ATCC 47076</strain>
    </source>
</reference>
<reference key="5">
    <citation type="journal article" date="2006" name="Mol. Syst. Biol.">
        <title>Highly accurate genome sequences of Escherichia coli K-12 strains MG1655 and W3110.</title>
        <authorList>
            <person name="Hayashi K."/>
            <person name="Morooka N."/>
            <person name="Yamamoto Y."/>
            <person name="Fujita K."/>
            <person name="Isono K."/>
            <person name="Choi S."/>
            <person name="Ohtsubo E."/>
            <person name="Baba T."/>
            <person name="Wanner B.L."/>
            <person name="Mori H."/>
            <person name="Horiuchi T."/>
        </authorList>
    </citation>
    <scope>NUCLEOTIDE SEQUENCE [LARGE SCALE GENOMIC DNA]</scope>
    <source>
        <strain>K12 / W3110 / ATCC 27325 / DSM 5911</strain>
    </source>
</reference>
<reference key="6">
    <citation type="journal article" date="1994" name="J. Mol. Biol.">
        <title>Purification and characterization of the Escherichia coli RecO protein. Renaturation of complementary single-stranded DNA molecules catalyzed by the RecO protein.</title>
        <authorList>
            <person name="Luisi-DeLuca C."/>
            <person name="Kolodner R."/>
        </authorList>
    </citation>
    <scope>PROTEIN SEQUENCE OF 1-14</scope>
    <scope>SUBUNIT</scope>
</reference>
<reference key="7">
    <citation type="journal article" date="1992" name="J. Bacteriol.">
        <title>Suppression of insertions in the complex pdxJ operon of Escherichia coli K-12 by lon and other mutations.</title>
        <authorList>
            <person name="Lam H.-M."/>
            <person name="Tancula E."/>
            <person name="Dempsey W.B."/>
            <person name="Winkler M.E."/>
        </authorList>
    </citation>
    <scope>NUCLEOTIDE SEQUENCE [GENOMIC DNA] OF 225-242</scope>
    <source>
        <strain>K12</strain>
    </source>
</reference>
<keyword id="KW-0002">3D-structure</keyword>
<keyword id="KW-0903">Direct protein sequencing</keyword>
<keyword id="KW-0227">DNA damage</keyword>
<keyword id="KW-0233">DNA recombination</keyword>
<keyword id="KW-0234">DNA repair</keyword>
<keyword id="KW-1185">Reference proteome</keyword>
<gene>
    <name type="primary">recO</name>
    <name type="ordered locus">b2565</name>
    <name type="ordered locus">JW2549</name>
</gene>
<comment type="function">
    <text>Involved in DNA repair and RecF pathway recombination.</text>
</comment>
<comment type="subunit">
    <text evidence="2">Monomer.</text>
</comment>
<comment type="interaction">
    <interactant intactId="EBI-1129540">
        <id>P0A7H3</id>
    </interactant>
    <interactant intactId="EBI-1117436">
        <id>P0A7H6</id>
        <label>recR</label>
    </interactant>
    <organismsDiffer>false</organismsDiffer>
    <experiments>3</experiments>
</comment>
<comment type="interaction">
    <interactant intactId="EBI-1129540">
        <id>P0A7H3</id>
    </interactant>
    <interactant intactId="EBI-1118620">
        <id>P0AGE0</id>
        <label>ssb</label>
    </interactant>
    <organismsDiffer>false</organismsDiffer>
    <experiments>3</experiments>
</comment>
<comment type="induction">
    <text>Encoded in the rnc-era-recO operon.</text>
</comment>
<comment type="disruption phenotype">
    <text evidence="1">No visible phenotype.</text>
</comment>
<comment type="similarity">
    <text evidence="3">Belongs to the RecO family.</text>
</comment>
<sequence length="242" mass="27391">MEGWQRAFVLHSRPWSETSLMLDVFTEESGRVRLVAKGARSKRSTLKGALQPFTPLLLRFGGRGEVKTLRSAEAVSLALPLSGITLYSGLYINELLSRVLEYETRFSELFFDYLHCIQSLAGVTGTPEPALRRFELALLGHLGYGVNFTHCAGSGEPVDDTMTYRYREEKGFIASVVIDNKTFTGRQLKALNAREFPDADTLRAAKRFTRMALKPYLGGKPLKSRELFRQFMPKRTVKTHYE</sequence>
<evidence type="ECO:0000269" key="1">
    <source>
    </source>
</evidence>
<evidence type="ECO:0000269" key="2">
    <source>
    </source>
</evidence>
<evidence type="ECO:0000305" key="3"/>
<evidence type="ECO:0007829" key="4">
    <source>
        <dbReference type="PDB" id="3Q8D"/>
    </source>
</evidence>
<feature type="chain" id="PRO_0000204949" description="DNA repair protein RecO">
    <location>
        <begin position="1"/>
        <end position="242"/>
    </location>
</feature>
<feature type="strand" evidence="4">
    <location>
        <begin position="4"/>
        <end position="14"/>
    </location>
</feature>
<feature type="strand" evidence="4">
    <location>
        <begin position="16"/>
        <end position="18"/>
    </location>
</feature>
<feature type="strand" evidence="4">
    <location>
        <begin position="20"/>
        <end position="26"/>
    </location>
</feature>
<feature type="turn" evidence="4">
    <location>
        <begin position="27"/>
        <end position="29"/>
    </location>
</feature>
<feature type="strand" evidence="4">
    <location>
        <begin position="30"/>
        <end position="36"/>
    </location>
</feature>
<feature type="turn" evidence="4">
    <location>
        <begin position="37"/>
        <end position="40"/>
    </location>
</feature>
<feature type="helix" evidence="4">
    <location>
        <begin position="46"/>
        <end position="49"/>
    </location>
</feature>
<feature type="strand" evidence="4">
    <location>
        <begin position="56"/>
        <end position="61"/>
    </location>
</feature>
<feature type="strand" evidence="4">
    <location>
        <begin position="63"/>
        <end position="75"/>
    </location>
</feature>
<feature type="helix" evidence="4">
    <location>
        <begin position="84"/>
        <end position="99"/>
    </location>
</feature>
<feature type="helix" evidence="4">
    <location>
        <begin position="107"/>
        <end position="121"/>
    </location>
</feature>
<feature type="helix" evidence="4">
    <location>
        <begin position="128"/>
        <end position="142"/>
    </location>
</feature>
<feature type="strand" evidence="4">
    <location>
        <begin position="148"/>
        <end position="150"/>
    </location>
</feature>
<feature type="turn" evidence="4">
    <location>
        <begin position="152"/>
        <end position="154"/>
    </location>
</feature>
<feature type="strand" evidence="4">
    <location>
        <begin position="163"/>
        <end position="167"/>
    </location>
</feature>
<feature type="turn" evidence="4">
    <location>
        <begin position="168"/>
        <end position="170"/>
    </location>
</feature>
<feature type="strand" evidence="4">
    <location>
        <begin position="171"/>
        <end position="174"/>
    </location>
</feature>
<feature type="strand" evidence="4">
    <location>
        <begin position="182"/>
        <end position="184"/>
    </location>
</feature>
<feature type="helix" evidence="4">
    <location>
        <begin position="185"/>
        <end position="193"/>
    </location>
</feature>
<feature type="helix" evidence="4">
    <location>
        <begin position="199"/>
        <end position="213"/>
    </location>
</feature>
<feature type="helix" evidence="4">
    <location>
        <begin position="214"/>
        <end position="216"/>
    </location>
</feature>
<feature type="helix" evidence="4">
    <location>
        <begin position="223"/>
        <end position="229"/>
    </location>
</feature>